<sequence length="223" mass="23555">MTRDRELQALLRLTAWLSPAFPIGSFAYSGGLERAVADGLVTDAALLAAWIGTLVGNGSVWNDAVLLAESHRQQAEAARLAEVAALAEALAGSRERHQETMLLGEAFLAAARAWPDEVFRRLPDKVAYPIAVGAVTGAHGIRPEKALAAFLHAYVSQAVSSGIRLGVAGQRDGVAILAGLEDHITEVARRAAASTLDDLGSATVQADIASLRHETQATRLFRS</sequence>
<comment type="function">
    <text evidence="1">Required for maturation of urease via the functional incorporation of the urease nickel metallocenter.</text>
</comment>
<comment type="subunit">
    <text evidence="1">UreD, UreF and UreG form a complex that acts as a GTP-hydrolysis-dependent molecular chaperone, activating the urease apoprotein by helping to assemble the nickel containing metallocenter of UreC. The UreE protein probably delivers the nickel.</text>
</comment>
<comment type="subcellular location">
    <subcellularLocation>
        <location evidence="1">Cytoplasm</location>
    </subcellularLocation>
</comment>
<comment type="similarity">
    <text evidence="1">Belongs to the UreF family.</text>
</comment>
<evidence type="ECO:0000255" key="1">
    <source>
        <dbReference type="HAMAP-Rule" id="MF_01385"/>
    </source>
</evidence>
<accession>Q1MCW3</accession>
<protein>
    <recommendedName>
        <fullName evidence="1">Urease accessory protein UreF</fullName>
    </recommendedName>
</protein>
<dbReference type="EMBL" id="AM236080">
    <property type="protein sequence ID" value="CAK09217.1"/>
    <property type="molecule type" value="Genomic_DNA"/>
</dbReference>
<dbReference type="RefSeq" id="WP_011653181.1">
    <property type="nucleotide sequence ID" value="NC_008380.1"/>
</dbReference>
<dbReference type="SMR" id="Q1MCW3"/>
<dbReference type="EnsemblBacteria" id="CAK09217">
    <property type="protein sequence ID" value="CAK09217"/>
    <property type="gene ID" value="RL3727A"/>
</dbReference>
<dbReference type="KEGG" id="rle:RL3727A"/>
<dbReference type="eggNOG" id="COG0830">
    <property type="taxonomic scope" value="Bacteria"/>
</dbReference>
<dbReference type="HOGENOM" id="CLU_049215_2_0_5"/>
<dbReference type="Proteomes" id="UP000006575">
    <property type="component" value="Chromosome"/>
</dbReference>
<dbReference type="GO" id="GO:0005737">
    <property type="term" value="C:cytoplasm"/>
    <property type="evidence" value="ECO:0007669"/>
    <property type="project" value="UniProtKB-SubCell"/>
</dbReference>
<dbReference type="GO" id="GO:0016151">
    <property type="term" value="F:nickel cation binding"/>
    <property type="evidence" value="ECO:0007669"/>
    <property type="project" value="UniProtKB-UniRule"/>
</dbReference>
<dbReference type="Gene3D" id="1.10.4190.10">
    <property type="entry name" value="Urease accessory protein UreF"/>
    <property type="match status" value="1"/>
</dbReference>
<dbReference type="HAMAP" id="MF_01385">
    <property type="entry name" value="UreF"/>
    <property type="match status" value="1"/>
</dbReference>
<dbReference type="InterPro" id="IPR002639">
    <property type="entry name" value="UreF"/>
</dbReference>
<dbReference type="InterPro" id="IPR038277">
    <property type="entry name" value="UreF_sf"/>
</dbReference>
<dbReference type="PANTHER" id="PTHR33620">
    <property type="entry name" value="UREASE ACCESSORY PROTEIN F"/>
    <property type="match status" value="1"/>
</dbReference>
<dbReference type="PANTHER" id="PTHR33620:SF1">
    <property type="entry name" value="UREASE ACCESSORY PROTEIN F"/>
    <property type="match status" value="1"/>
</dbReference>
<dbReference type="Pfam" id="PF01730">
    <property type="entry name" value="UreF"/>
    <property type="match status" value="1"/>
</dbReference>
<dbReference type="PIRSF" id="PIRSF009467">
    <property type="entry name" value="Ureas_acces_UreF"/>
    <property type="match status" value="1"/>
</dbReference>
<feature type="chain" id="PRO_0000344165" description="Urease accessory protein UreF">
    <location>
        <begin position="1"/>
        <end position="223"/>
    </location>
</feature>
<name>UREF_RHIJ3</name>
<keyword id="KW-0143">Chaperone</keyword>
<keyword id="KW-0963">Cytoplasm</keyword>
<keyword id="KW-0996">Nickel insertion</keyword>
<proteinExistence type="inferred from homology"/>
<reference key="1">
    <citation type="journal article" date="2006" name="Genome Biol.">
        <title>The genome of Rhizobium leguminosarum has recognizable core and accessory components.</title>
        <authorList>
            <person name="Young J.P.W."/>
            <person name="Crossman L.C."/>
            <person name="Johnston A.W.B."/>
            <person name="Thomson N.R."/>
            <person name="Ghazoui Z.F."/>
            <person name="Hull K.H."/>
            <person name="Wexler M."/>
            <person name="Curson A.R.J."/>
            <person name="Todd J.D."/>
            <person name="Poole P.S."/>
            <person name="Mauchline T.H."/>
            <person name="East A.K."/>
            <person name="Quail M.A."/>
            <person name="Churcher C."/>
            <person name="Arrowsmith C."/>
            <person name="Cherevach I."/>
            <person name="Chillingworth T."/>
            <person name="Clarke K."/>
            <person name="Cronin A."/>
            <person name="Davis P."/>
            <person name="Fraser A."/>
            <person name="Hance Z."/>
            <person name="Hauser H."/>
            <person name="Jagels K."/>
            <person name="Moule S."/>
            <person name="Mungall K."/>
            <person name="Norbertczak H."/>
            <person name="Rabbinowitsch E."/>
            <person name="Sanders M."/>
            <person name="Simmonds M."/>
            <person name="Whitehead S."/>
            <person name="Parkhill J."/>
        </authorList>
    </citation>
    <scope>NUCLEOTIDE SEQUENCE [LARGE SCALE GENOMIC DNA]</scope>
    <source>
        <strain>DSM 114642 / LMG 32736 / 3841</strain>
    </source>
</reference>
<organism>
    <name type="scientific">Rhizobium johnstonii (strain DSM 114642 / LMG 32736 / 3841)</name>
    <name type="common">Rhizobium leguminosarum bv. viciae</name>
    <dbReference type="NCBI Taxonomy" id="216596"/>
    <lineage>
        <taxon>Bacteria</taxon>
        <taxon>Pseudomonadati</taxon>
        <taxon>Pseudomonadota</taxon>
        <taxon>Alphaproteobacteria</taxon>
        <taxon>Hyphomicrobiales</taxon>
        <taxon>Rhizobiaceae</taxon>
        <taxon>Rhizobium/Agrobacterium group</taxon>
        <taxon>Rhizobium</taxon>
        <taxon>Rhizobium johnstonii</taxon>
    </lineage>
</organism>
<gene>
    <name evidence="1" type="primary">ureF</name>
    <name type="ordered locus">RL3727.1</name>
    <name type="ORF">RL3727A</name>
</gene>